<dbReference type="EC" id="6.3.5.-" evidence="1"/>
<dbReference type="EMBL" id="CP000716">
    <property type="protein sequence ID" value="ABR30807.1"/>
    <property type="molecule type" value="Genomic_DNA"/>
</dbReference>
<dbReference type="RefSeq" id="WP_012057168.1">
    <property type="nucleotide sequence ID" value="NC_009616.1"/>
</dbReference>
<dbReference type="SMR" id="A6LLK6"/>
<dbReference type="STRING" id="391009.Tmel_0946"/>
<dbReference type="KEGG" id="tme:Tmel_0946"/>
<dbReference type="eggNOG" id="COG0064">
    <property type="taxonomic scope" value="Bacteria"/>
</dbReference>
<dbReference type="HOGENOM" id="CLU_019240_0_0_0"/>
<dbReference type="OrthoDB" id="9804078at2"/>
<dbReference type="Proteomes" id="UP000001110">
    <property type="component" value="Chromosome"/>
</dbReference>
<dbReference type="GO" id="GO:0050566">
    <property type="term" value="F:asparaginyl-tRNA synthase (glutamine-hydrolyzing) activity"/>
    <property type="evidence" value="ECO:0007669"/>
    <property type="project" value="RHEA"/>
</dbReference>
<dbReference type="GO" id="GO:0005524">
    <property type="term" value="F:ATP binding"/>
    <property type="evidence" value="ECO:0007669"/>
    <property type="project" value="UniProtKB-KW"/>
</dbReference>
<dbReference type="GO" id="GO:0050567">
    <property type="term" value="F:glutaminyl-tRNA synthase (glutamine-hydrolyzing) activity"/>
    <property type="evidence" value="ECO:0007669"/>
    <property type="project" value="UniProtKB-UniRule"/>
</dbReference>
<dbReference type="GO" id="GO:0070681">
    <property type="term" value="P:glutaminyl-tRNAGln biosynthesis via transamidation"/>
    <property type="evidence" value="ECO:0007669"/>
    <property type="project" value="TreeGrafter"/>
</dbReference>
<dbReference type="GO" id="GO:0006412">
    <property type="term" value="P:translation"/>
    <property type="evidence" value="ECO:0007669"/>
    <property type="project" value="UniProtKB-UniRule"/>
</dbReference>
<dbReference type="FunFam" id="1.10.10.410:FF:000001">
    <property type="entry name" value="Aspartyl/glutamyl-tRNA(Asn/Gln) amidotransferase subunit B"/>
    <property type="match status" value="1"/>
</dbReference>
<dbReference type="FunFam" id="1.10.150.380:FF:000001">
    <property type="entry name" value="Aspartyl/glutamyl-tRNA(Asn/Gln) amidotransferase subunit B"/>
    <property type="match status" value="1"/>
</dbReference>
<dbReference type="Gene3D" id="1.10.10.410">
    <property type="match status" value="1"/>
</dbReference>
<dbReference type="Gene3D" id="1.10.150.380">
    <property type="entry name" value="GatB domain, N-terminal subdomain"/>
    <property type="match status" value="1"/>
</dbReference>
<dbReference type="HAMAP" id="MF_00121">
    <property type="entry name" value="GatB"/>
    <property type="match status" value="1"/>
</dbReference>
<dbReference type="InterPro" id="IPR017959">
    <property type="entry name" value="Asn/Gln-tRNA_amidoTrfase_suB/E"/>
</dbReference>
<dbReference type="InterPro" id="IPR006075">
    <property type="entry name" value="Asn/Gln-tRNA_Trfase_suB/E_cat"/>
</dbReference>
<dbReference type="InterPro" id="IPR018027">
    <property type="entry name" value="Asn/Gln_amidotransferase"/>
</dbReference>
<dbReference type="InterPro" id="IPR003789">
    <property type="entry name" value="Asn/Gln_tRNA_amidoTrase-B-like"/>
</dbReference>
<dbReference type="InterPro" id="IPR004413">
    <property type="entry name" value="GatB"/>
</dbReference>
<dbReference type="InterPro" id="IPR042114">
    <property type="entry name" value="GatB_C_1"/>
</dbReference>
<dbReference type="InterPro" id="IPR023168">
    <property type="entry name" value="GatB_Yqey_C_2"/>
</dbReference>
<dbReference type="InterPro" id="IPR017958">
    <property type="entry name" value="Gln-tRNA_amidoTrfase_suB_CS"/>
</dbReference>
<dbReference type="InterPro" id="IPR014746">
    <property type="entry name" value="Gln_synth/guanido_kin_cat_dom"/>
</dbReference>
<dbReference type="NCBIfam" id="TIGR00133">
    <property type="entry name" value="gatB"/>
    <property type="match status" value="1"/>
</dbReference>
<dbReference type="NCBIfam" id="NF004012">
    <property type="entry name" value="PRK05477.1-2"/>
    <property type="match status" value="1"/>
</dbReference>
<dbReference type="NCBIfam" id="NF004014">
    <property type="entry name" value="PRK05477.1-4"/>
    <property type="match status" value="1"/>
</dbReference>
<dbReference type="PANTHER" id="PTHR11659">
    <property type="entry name" value="GLUTAMYL-TRNA GLN AMIDOTRANSFERASE SUBUNIT B MITOCHONDRIAL AND PROKARYOTIC PET112-RELATED"/>
    <property type="match status" value="1"/>
</dbReference>
<dbReference type="PANTHER" id="PTHR11659:SF0">
    <property type="entry name" value="GLUTAMYL-TRNA(GLN) AMIDOTRANSFERASE SUBUNIT B, MITOCHONDRIAL"/>
    <property type="match status" value="1"/>
</dbReference>
<dbReference type="Pfam" id="PF02934">
    <property type="entry name" value="GatB_N"/>
    <property type="match status" value="1"/>
</dbReference>
<dbReference type="Pfam" id="PF02637">
    <property type="entry name" value="GatB_Yqey"/>
    <property type="match status" value="1"/>
</dbReference>
<dbReference type="SMART" id="SM00845">
    <property type="entry name" value="GatB_Yqey"/>
    <property type="match status" value="1"/>
</dbReference>
<dbReference type="SUPFAM" id="SSF89095">
    <property type="entry name" value="GatB/YqeY motif"/>
    <property type="match status" value="1"/>
</dbReference>
<dbReference type="SUPFAM" id="SSF55931">
    <property type="entry name" value="Glutamine synthetase/guanido kinase"/>
    <property type="match status" value="1"/>
</dbReference>
<dbReference type="PROSITE" id="PS01234">
    <property type="entry name" value="GATB"/>
    <property type="match status" value="1"/>
</dbReference>
<feature type="chain" id="PRO_1000071378" description="Aspartyl/glutamyl-tRNA(Asn/Gln) amidotransferase subunit B">
    <location>
        <begin position="1"/>
        <end position="476"/>
    </location>
</feature>
<keyword id="KW-0067">ATP-binding</keyword>
<keyword id="KW-0436">Ligase</keyword>
<keyword id="KW-0547">Nucleotide-binding</keyword>
<keyword id="KW-0648">Protein biosynthesis</keyword>
<name>GATB_THEM4</name>
<protein>
    <recommendedName>
        <fullName evidence="1">Aspartyl/glutamyl-tRNA(Asn/Gln) amidotransferase subunit B</fullName>
        <shortName evidence="1">Asp/Glu-ADT subunit B</shortName>
        <ecNumber evidence="1">6.3.5.-</ecNumber>
    </recommendedName>
</protein>
<comment type="function">
    <text evidence="1">Allows the formation of correctly charged Asn-tRNA(Asn) or Gln-tRNA(Gln) through the transamidation of misacylated Asp-tRNA(Asn) or Glu-tRNA(Gln) in organisms which lack either or both of asparaginyl-tRNA or glutaminyl-tRNA synthetases. The reaction takes place in the presence of glutamine and ATP through an activated phospho-Asp-tRNA(Asn) or phospho-Glu-tRNA(Gln).</text>
</comment>
<comment type="catalytic activity">
    <reaction evidence="1">
        <text>L-glutamyl-tRNA(Gln) + L-glutamine + ATP + H2O = L-glutaminyl-tRNA(Gln) + L-glutamate + ADP + phosphate + H(+)</text>
        <dbReference type="Rhea" id="RHEA:17521"/>
        <dbReference type="Rhea" id="RHEA-COMP:9681"/>
        <dbReference type="Rhea" id="RHEA-COMP:9684"/>
        <dbReference type="ChEBI" id="CHEBI:15377"/>
        <dbReference type="ChEBI" id="CHEBI:15378"/>
        <dbReference type="ChEBI" id="CHEBI:29985"/>
        <dbReference type="ChEBI" id="CHEBI:30616"/>
        <dbReference type="ChEBI" id="CHEBI:43474"/>
        <dbReference type="ChEBI" id="CHEBI:58359"/>
        <dbReference type="ChEBI" id="CHEBI:78520"/>
        <dbReference type="ChEBI" id="CHEBI:78521"/>
        <dbReference type="ChEBI" id="CHEBI:456216"/>
    </reaction>
</comment>
<comment type="catalytic activity">
    <reaction evidence="1">
        <text>L-aspartyl-tRNA(Asn) + L-glutamine + ATP + H2O = L-asparaginyl-tRNA(Asn) + L-glutamate + ADP + phosphate + 2 H(+)</text>
        <dbReference type="Rhea" id="RHEA:14513"/>
        <dbReference type="Rhea" id="RHEA-COMP:9674"/>
        <dbReference type="Rhea" id="RHEA-COMP:9677"/>
        <dbReference type="ChEBI" id="CHEBI:15377"/>
        <dbReference type="ChEBI" id="CHEBI:15378"/>
        <dbReference type="ChEBI" id="CHEBI:29985"/>
        <dbReference type="ChEBI" id="CHEBI:30616"/>
        <dbReference type="ChEBI" id="CHEBI:43474"/>
        <dbReference type="ChEBI" id="CHEBI:58359"/>
        <dbReference type="ChEBI" id="CHEBI:78515"/>
        <dbReference type="ChEBI" id="CHEBI:78516"/>
        <dbReference type="ChEBI" id="CHEBI:456216"/>
    </reaction>
</comment>
<comment type="subunit">
    <text evidence="1">Heterotrimer of A, B and C subunits.</text>
</comment>
<comment type="similarity">
    <text evidence="1">Belongs to the GatB/GatE family. GatB subfamily.</text>
</comment>
<organism>
    <name type="scientific">Thermosipho melanesiensis (strain DSM 12029 / CIP 104789 / BI429)</name>
    <dbReference type="NCBI Taxonomy" id="391009"/>
    <lineage>
        <taxon>Bacteria</taxon>
        <taxon>Thermotogati</taxon>
        <taxon>Thermotogota</taxon>
        <taxon>Thermotogae</taxon>
        <taxon>Thermotogales</taxon>
        <taxon>Fervidobacteriaceae</taxon>
        <taxon>Thermosipho</taxon>
    </lineage>
</organism>
<gene>
    <name evidence="1" type="primary">gatB</name>
    <name type="ordered locus">Tmel_0946</name>
</gene>
<reference key="1">
    <citation type="submission" date="2007-05" db="EMBL/GenBank/DDBJ databases">
        <title>Complete sequence of Thermosipho melanesiensis BI429.</title>
        <authorList>
            <consortium name="US DOE Joint Genome Institute"/>
            <person name="Copeland A."/>
            <person name="Lucas S."/>
            <person name="Lapidus A."/>
            <person name="Barry K."/>
            <person name="Glavina del Rio T."/>
            <person name="Dalin E."/>
            <person name="Tice H."/>
            <person name="Pitluck S."/>
            <person name="Chertkov O."/>
            <person name="Brettin T."/>
            <person name="Bruce D."/>
            <person name="Detter J.C."/>
            <person name="Han C."/>
            <person name="Schmutz J."/>
            <person name="Larimer F."/>
            <person name="Land M."/>
            <person name="Hauser L."/>
            <person name="Kyrpides N."/>
            <person name="Mikhailova N."/>
            <person name="Nelson K."/>
            <person name="Gogarten J.P."/>
            <person name="Noll K."/>
            <person name="Richardson P."/>
        </authorList>
    </citation>
    <scope>NUCLEOTIDE SEQUENCE [LARGE SCALE GENOMIC DNA]</scope>
    <source>
        <strain>DSM 12029 / CIP 104789 / BI429</strain>
    </source>
</reference>
<evidence type="ECO:0000255" key="1">
    <source>
        <dbReference type="HAMAP-Rule" id="MF_00121"/>
    </source>
</evidence>
<proteinExistence type="inferred from homology"/>
<sequence length="476" mass="54467">MRFKPVIGLEIHVQLNTKTKAFCSCPADVFELEPNNAICPVCTGQPGALPVPSKQMYEFGILLAAALNCKIHEFTRFDRKNYFYPDLPKGYQITQYFYPLATNGYLKLNGKKIRINRIHLEEDAGKLLHSSETITQAESTLVDMNRCGVPLAEIVTEPDIESPEEARKFLEKLRQILRYLGVSTGDMEKGALRCDANISVIDLENNVQSNKVEVKNMNSFKFVEKALEYEFNRIKKHLKKGENVVKETRGWDLASKKTISMRSKEEANDYRYFPEPDIPPVVIPKEEINKIIEKIPELPDEKINRFKIQYGLTDYEAGILTTSINLANYFEECVKETKNPKETSNWFLTELLKYISPEEVFENLKIKPKHFKELFDLISSGKITRNIAKEIFKEIFETGKNPEEIVKEKGIEVIGDESLIEDMLKKIMAENEDKVNAYKNGKKGLLGFFVGQIMKQTKGKADAKKANEIAKRLLGD</sequence>
<accession>A6LLK6</accession>